<name>LATA_LATGE</name>
<dbReference type="EMBL" id="KC414036">
    <property type="protein sequence ID" value="AGD80170.1"/>
    <property type="molecule type" value="Genomic_DNA"/>
</dbReference>
<dbReference type="SMR" id="L7XCU0"/>
<dbReference type="GO" id="GO:0005576">
    <property type="term" value="C:extracellular region"/>
    <property type="evidence" value="ECO:0007669"/>
    <property type="project" value="UniProtKB-SubCell"/>
</dbReference>
<dbReference type="GO" id="GO:0044231">
    <property type="term" value="C:host cell presynaptic membrane"/>
    <property type="evidence" value="ECO:0007669"/>
    <property type="project" value="UniProtKB-KW"/>
</dbReference>
<dbReference type="GO" id="GO:0016020">
    <property type="term" value="C:membrane"/>
    <property type="evidence" value="ECO:0007669"/>
    <property type="project" value="UniProtKB-KW"/>
</dbReference>
<dbReference type="GO" id="GO:0044218">
    <property type="term" value="C:other organism cell membrane"/>
    <property type="evidence" value="ECO:0007669"/>
    <property type="project" value="UniProtKB-KW"/>
</dbReference>
<dbReference type="GO" id="GO:0090729">
    <property type="term" value="F:toxin activity"/>
    <property type="evidence" value="ECO:0007669"/>
    <property type="project" value="UniProtKB-KW"/>
</dbReference>
<dbReference type="GO" id="GO:0006887">
    <property type="term" value="P:exocytosis"/>
    <property type="evidence" value="ECO:0007669"/>
    <property type="project" value="UniProtKB-KW"/>
</dbReference>
<dbReference type="Gene3D" id="1.25.40.20">
    <property type="entry name" value="Ankyrin repeat-containing domain"/>
    <property type="match status" value="5"/>
</dbReference>
<dbReference type="InterPro" id="IPR002110">
    <property type="entry name" value="Ankyrin_rpt"/>
</dbReference>
<dbReference type="InterPro" id="IPR036770">
    <property type="entry name" value="Ankyrin_rpt-contain_sf"/>
</dbReference>
<dbReference type="PANTHER" id="PTHR24198">
    <property type="entry name" value="ANKYRIN REPEAT AND PROTEIN KINASE DOMAIN-CONTAINING PROTEIN"/>
    <property type="match status" value="1"/>
</dbReference>
<dbReference type="PANTHER" id="PTHR24198:SF165">
    <property type="entry name" value="ANKYRIN REPEAT-CONTAINING PROTEIN-RELATED"/>
    <property type="match status" value="1"/>
</dbReference>
<dbReference type="Pfam" id="PF12796">
    <property type="entry name" value="Ank_2"/>
    <property type="match status" value="6"/>
</dbReference>
<dbReference type="Pfam" id="PF13637">
    <property type="entry name" value="Ank_4"/>
    <property type="match status" value="1"/>
</dbReference>
<dbReference type="PRINTS" id="PR01415">
    <property type="entry name" value="ANKYRIN"/>
</dbReference>
<dbReference type="SMART" id="SM00248">
    <property type="entry name" value="ANK"/>
    <property type="match status" value="20"/>
</dbReference>
<dbReference type="SUPFAM" id="SSF48403">
    <property type="entry name" value="Ankyrin repeat"/>
    <property type="match status" value="2"/>
</dbReference>
<dbReference type="PROSITE" id="PS50297">
    <property type="entry name" value="ANK_REP_REGION"/>
    <property type="match status" value="1"/>
</dbReference>
<dbReference type="PROSITE" id="PS50088">
    <property type="entry name" value="ANK_REPEAT"/>
    <property type="match status" value="10"/>
</dbReference>
<proteinExistence type="evidence at protein level"/>
<feature type="chain" id="PRO_0000455428" description="Alpha-latrotoxin-Lg1a" evidence="9">
    <location>
        <begin position="1" status="less than"/>
        <end position="1177"/>
    </location>
</feature>
<feature type="propeptide" id="PRO_0000455429" evidence="8">
    <location>
        <begin position="1178"/>
        <end position="1368" status="greater than"/>
    </location>
</feature>
<feature type="repeat" description="ANK 1" evidence="4">
    <location>
        <begin position="469"/>
        <end position="500"/>
    </location>
</feature>
<feature type="repeat" description="ANK 2" evidence="4">
    <location>
        <begin position="504"/>
        <end position="533"/>
    </location>
</feature>
<feature type="repeat" description="ANK 3" evidence="4">
    <location>
        <begin position="538"/>
        <end position="568"/>
    </location>
</feature>
<feature type="repeat" description="ANK 4" evidence="4">
    <location>
        <begin position="572"/>
        <end position="601"/>
    </location>
</feature>
<feature type="repeat" description="ANK 5" evidence="4">
    <location>
        <begin position="605"/>
        <end position="635"/>
    </location>
</feature>
<feature type="repeat" description="ANK 6" evidence="4">
    <location>
        <begin position="639"/>
        <end position="669"/>
    </location>
</feature>
<feature type="repeat" description="ANK 7" evidence="4">
    <location>
        <begin position="674"/>
        <end position="704"/>
    </location>
</feature>
<feature type="repeat" description="ANK 8" evidence="4">
    <location>
        <begin position="708"/>
        <end position="737"/>
    </location>
</feature>
<feature type="repeat" description="ANK 9" evidence="4">
    <location>
        <begin position="741"/>
        <end position="770"/>
    </location>
</feature>
<feature type="repeat" description="ANK 10" evidence="4">
    <location>
        <begin position="774"/>
        <end position="803"/>
    </location>
</feature>
<feature type="repeat" description="ANK 11" evidence="4">
    <location>
        <begin position="807"/>
        <end position="837"/>
    </location>
</feature>
<feature type="repeat" description="ANK 12" evidence="4">
    <location>
        <begin position="841"/>
        <end position="870"/>
    </location>
</feature>
<feature type="repeat" description="ANK 13" evidence="4">
    <location>
        <begin position="874"/>
        <end position="903"/>
    </location>
</feature>
<feature type="repeat" description="ANK 14" evidence="4">
    <location>
        <begin position="907"/>
        <end position="936"/>
    </location>
</feature>
<feature type="repeat" description="ANK 15" evidence="4">
    <location>
        <begin position="953"/>
        <end position="981"/>
    </location>
</feature>
<feature type="repeat" description="ANK 16" evidence="4">
    <location>
        <begin position="982"/>
        <end position="1011"/>
    </location>
</feature>
<feature type="repeat" description="ANK 17" evidence="4">
    <location>
        <begin position="1013"/>
        <end position="1042"/>
    </location>
</feature>
<feature type="repeat" description="ANK 18" evidence="4">
    <location>
        <begin position="1046"/>
        <end position="1075"/>
    </location>
</feature>
<feature type="repeat" description="ANK 19" evidence="4">
    <location>
        <begin position="1079"/>
        <end position="1109"/>
    </location>
</feature>
<feature type="repeat" description="ANK 20" evidence="4">
    <location>
        <begin position="1115"/>
        <end position="1144"/>
    </location>
</feature>
<feature type="region of interest" description="Helix H8 is the probable transmembrane region of the tetrameric pore inserted in the target cell membrane" evidence="3">
    <location>
        <begin position="217"/>
        <end position="236"/>
    </location>
</feature>
<feature type="region of interest" description="Furin-like endopeptidase recognition region" evidence="2">
    <location>
        <begin position="1174"/>
        <end position="1177"/>
    </location>
</feature>
<feature type="disulfide bond" evidence="2">
    <location>
        <begin position="392"/>
        <end position="1044"/>
    </location>
</feature>
<feature type="non-terminal residue" evidence="10">
    <location>
        <position position="1"/>
    </location>
</feature>
<feature type="non-terminal residue" evidence="10">
    <location>
        <position position="1368"/>
    </location>
</feature>
<accession>L7XCU0</accession>
<evidence type="ECO:0000250" key="1">
    <source>
        <dbReference type="UniProtKB" id="P0DJE4"/>
    </source>
</evidence>
<evidence type="ECO:0000250" key="2">
    <source>
        <dbReference type="UniProtKB" id="P23631"/>
    </source>
</evidence>
<evidence type="ECO:0000250" key="3">
    <source>
        <dbReference type="UniProtKB" id="Q9XZC0"/>
    </source>
</evidence>
<evidence type="ECO:0000255" key="4"/>
<evidence type="ECO:0000269" key="5">
    <source>
    </source>
</evidence>
<evidence type="ECO:0000269" key="6">
    <source>
    </source>
</evidence>
<evidence type="ECO:0000303" key="7">
    <source>
    </source>
</evidence>
<evidence type="ECO:0000305" key="8"/>
<evidence type="ECO:0000305" key="9">
    <source>
    </source>
</evidence>
<evidence type="ECO:0000312" key="10">
    <source>
        <dbReference type="EMBL" id="AGD80170.1"/>
    </source>
</evidence>
<reference evidence="10" key="1">
    <citation type="journal article" date="2013" name="Mol. Biol. Evol.">
        <title>Molecular evolution of alpha-latrotoxin, the exceptionally potent vertebrate neurotoxin in black widow spider venom.</title>
        <authorList>
            <person name="Garb J.E."/>
            <person name="Hayashi C.Y."/>
        </authorList>
    </citation>
    <scope>NUCLEOTIDE SEQUENCE [GENOMIC DNA]</scope>
</reference>
<reference key="2">
    <citation type="journal article" date="2020" name="Toxicon X">
        <title>Partial proteomic analysis of brown widow spider (Latrodectus geometricus) venom to determine the biological activities.</title>
        <authorList>
            <person name="Khamtorn P."/>
            <person name="Rungsa P."/>
            <person name="Jangpromma N."/>
            <person name="Klaynongsruang S."/>
            <person name="Daduang J."/>
            <person name="Tessiri T."/>
            <person name="Daduang S."/>
        </authorList>
    </citation>
    <scope>IDENTIFICATION BY MASS SPECTROMETRY</scope>
    <scope>SUBCELLULAR LOCATION</scope>
    <source>
        <tissue>Venom</tissue>
    </source>
</reference>
<reference key="3">
    <citation type="journal article" date="2022" name="J. Med. Entomol.">
        <title>Expression of brown and southern black widow spider (Araneae: Theridiidae) latrotoxins is tissue- and life stage-specific for alpha-latroinsectotoxins and delta-latroinsectotoxins and is ubiquitous for alpha-latrotoxins.</title>
        <authorList>
            <person name="Torres S.L."/>
            <person name="Landeros A."/>
            <person name="Penhallegon E.J."/>
            <person name="Salazar K."/>
            <person name="Porter L.M."/>
        </authorList>
    </citation>
    <scope>TISSUE SPECIFICITY</scope>
    <scope>DEVELOPMENTAL STAGE</scope>
</reference>
<comment type="function">
    <text evidence="2">Presynaptic neurotoxin that causes massive release of neurotransmitters from vertebrate (but not invertebrate) nerve terminals and endocrine cells via a complex mechanism involving activation of receptor(s) and toxin insertion into the plasma membrane with subsequent pore formation. Binds to neurexin-1-alpha (NRXN1) in a calcium dependent manner, adhesion G protein-coupled receptor L1 (ADGRL1, also termed latrophilin-1 and calcium-independent receptor of latrotoxin (CIRL)), and receptor-type tyrosine-protein phosphatase S (PTPRS), also termed PTP sigma. NRXN1 and PTPRS are suggested to provide a platform for binding and subsequent pore formation events. In contrast, binding to ADGRL1 does not involve oligomerization and channel formation, but direct downstream stimulation of the synaptic fusion machinery.</text>
</comment>
<comment type="subunit">
    <text evidence="2">Homotetramer in membranes.</text>
</comment>
<comment type="subcellular location">
    <subcellularLocation>
        <location evidence="5">Secreted</location>
    </subcellularLocation>
    <subcellularLocation>
        <location evidence="2">Target cell membrane</location>
    </subcellularLocation>
    <text evidence="2">Forms a membrane channel in the prey.</text>
</comment>
<comment type="tissue specificity">
    <text evidence="1">Expressed in venom gland, cephalothorax, and abdomen tissues from both males and females.</text>
</comment>
<comment type="developmental stage">
    <text evidence="6">Expressed in all life stages examined, including adults, spiderlings and eggs.</text>
</comment>
<comment type="domain">
    <text evidence="3">The H8 helix is predicted to insert into membranes and form pores by assembling into tetramers. The helix is contained within a helical bundle domain that undergoes significant conformational changes during pore formation to allow exposure of the H8 transmembrane helix and transition of the toxin from a soluble monomer to a transmembrane tetramer.</text>
</comment>
<comment type="miscellaneous">
    <text>Is the main neurotoxin responsible for the human envenomation syndrome known as latrodectism that results from bites by Latrodectus species.</text>
</comment>
<comment type="similarity">
    <text evidence="8">Belongs to the cationic peptide 01 (latrotoxin) family. 03 (alpha-latrotoxin) subfamily.</text>
</comment>
<keyword id="KW-0040">ANK repeat</keyword>
<keyword id="KW-0165">Cleavage on pair of basic residues</keyword>
<keyword id="KW-1015">Disulfide bond</keyword>
<keyword id="KW-0268">Exocytosis</keyword>
<keyword id="KW-1213">G-protein coupled receptor impairing toxin</keyword>
<keyword id="KW-0472">Membrane</keyword>
<keyword id="KW-0528">Neurotoxin</keyword>
<keyword id="KW-0638">Presynaptic neurotoxin</keyword>
<keyword id="KW-0677">Repeat</keyword>
<keyword id="KW-0964">Secreted</keyword>
<keyword id="KW-1052">Target cell membrane</keyword>
<keyword id="KW-1053">Target membrane</keyword>
<keyword id="KW-0800">Toxin</keyword>
<keyword id="KW-0812">Transmembrane</keyword>
<sequence length="1368" mass="153492">NEELTLEEKAEICSELELQQKYADIASNIIGDLSSLPMVGKIVGTIAAAAMTVAHVGSGRLDIEQTLLGCSDLPFDQIKEILETRFNEVDRKLESHSAALEEITKLVDKSISAVEKTRKQMNKRFDEVMKSIQDAKVSPIVSKINNFAKYFDAEKERVRGLKLNDYILKLEEPNGILLHFKDVRTPKDDSLQSPLFSIIQERYAIPKTVDDELAFKVLYAILYGTQTYVSVMFFLLEQYSFLANHYYEKGDLEKYDEYFNNLNNVFLDFKSSLVGSGASNNEGLIDNVLQVLMTVKSNEFLGLGKNSLEEMLNEKINLFSKIKEEIEGKQRMTLSETPENFARISFEKDITTPIGDWRDSREVRYAVQYASETLFSKIGHWSDPVSVRAKACPTLRMPVDQTRRNVLVFRKFDNSKPQLVGEITPYQSNFIDIDRDLYNAASNPDSAVGFMEFKKLISNGANIRAVFNQGRTVFHAAAKSGNDKIMIELTFFSKYTDINQPDKKGYTPIHVAADSGNAGIVNLLIRSGISVNSKTYNFLQTPLHLAAQRGFVATFQRLMESPEININERDKDGFTPLHYAVRGGERILEAFINQAGIDVNVKSDKGLTPFHLAVIKNDWPVASTLLRSKKIDINAIDENNMTALHYAAILGFLETTKQLINLKEINANAVSSPGLLSALHYAILYKHDDVALFLLKSSKVNYNLKAFGDITPLHLAVMQGRKQVLSEMFNIGININQKTAEKYTPLHLAAMSKYPELVEILLDQGSNLEAKTITGATPLNLATFKGKSQAALILLKDEVNWREPDENGQMPIHGAAMNGLLDVAQAILYLDATVLDIEDKNLDTPLNLAAQNSHIDMVKYFIDLGAKVNTRNKKGQAPLLAFSKKGNLDMVKYLFDKNANVYIADNDGLNFFYYAVRNGHLNIVKYAMSEKDKFEWSTTDNNRSDGCSGECAISHFAVCDAVQYDKIEIVKYFVGTLGHYSICSPLHQAARYGHIHIVKYLVEEEVLSVDGSKPDTPLCYASENGHLAVVQYLIRNGAKVNHDCANGMTAIDKAITKNQLQVVQILAENGVDFRRKNRLDATPFLTAVASNSYEIAEYLIREKRQNININEQNGNKETALHLAVYYKNLQMIKLLVKYGIDENIRNGYDKTALDIARDNKISSIVEYLQTKSGKFRREYKSSNGEHDLLHENRISNFTDSKNLEYQHQHFINADNDASQSFSNTAANQNIDVIGTLLLIDVLIRRFSKQGYINNKPDSASDGIAQAAALAITEKFEDILNSLHNKSTEEQVDFAEVHRKIYAALRSGRNSQVHQVLCSSLKSISTLKPEDIKKLVSVVLSFQSSISLPEVSASAREVYGETLHLFHES</sequence>
<organism>
    <name type="scientific">Latrodectus geometricus</name>
    <name type="common">Brown widow spider</name>
    <dbReference type="NCBI Taxonomy" id="156851"/>
    <lineage>
        <taxon>Eukaryota</taxon>
        <taxon>Metazoa</taxon>
        <taxon>Ecdysozoa</taxon>
        <taxon>Arthropoda</taxon>
        <taxon>Chelicerata</taxon>
        <taxon>Arachnida</taxon>
        <taxon>Araneae</taxon>
        <taxon>Araneomorphae</taxon>
        <taxon>Entelegynae</taxon>
        <taxon>Araneoidea</taxon>
        <taxon>Theridiidae</taxon>
        <taxon>Latrodectus</taxon>
    </lineage>
</organism>
<protein>
    <recommendedName>
        <fullName evidence="8">Alpha-latrotoxin-Lg1a</fullName>
        <shortName evidence="8">Alpha-LTX-Lg1a</shortName>
    </recommendedName>
    <alternativeName>
        <fullName evidence="7">Alpha-latrotoxin</fullName>
        <shortName evidence="7">Alpha-LTX</shortName>
    </alternativeName>
</protein>